<geneLocation type="plasmid">
    <name>pSRQ700</name>
</geneLocation>
<gene>
    <name evidence="3" type="primary">llaDCHIB</name>
    <name evidence="3" type="synonym">llaIIB</name>
</gene>
<name>MTL22_LACLC</name>
<accession>P50178</accession>
<evidence type="ECO:0000269" key="1">
    <source>
    </source>
</evidence>
<evidence type="ECO:0000303" key="2">
    <source>
    </source>
</evidence>
<evidence type="ECO:0000303" key="3">
    <source>
    </source>
</evidence>
<evidence type="ECO:0000305" key="4"/>
<evidence type="ECO:0000305" key="5">
    <source>
    </source>
</evidence>
<protein>
    <recommendedName>
        <fullName evidence="2">Type II methyltransferase M2.LlaDCHI</fullName>
        <shortName evidence="2">M2.LlaDCHI</shortName>
        <ecNumber>2.1.1.72</ecNumber>
    </recommendedName>
    <alternativeName>
        <fullName>Adenine-specific methyltransferase LlaDCHIB</fullName>
    </alternativeName>
    <alternativeName>
        <fullName evidence="3">M.LlaIIB</fullName>
    </alternativeName>
    <alternativeName>
        <fullName>Modification methylase LlaDCHIB</fullName>
        <shortName evidence="3">M.LlaDCHIB</shortName>
    </alternativeName>
</protein>
<feature type="chain" id="PRO_0000087954" description="Type II methyltransferase M2.LlaDCHI">
    <location>
        <begin position="1"/>
        <end position="269"/>
    </location>
</feature>
<reference key="1">
    <citation type="journal article" date="1995" name="Appl. Environ. Microbiol.">
        <title>Cloning and sequencing of LlaDCHI restriction/modification genes from Lactococcus lactis and relatedness of this system to the Streptococcus pneumoniae DpnII system.</title>
        <authorList>
            <person name="Moineau S."/>
            <person name="Walker S.A."/>
            <person name="Vedamuthu E.R."/>
            <person name="Vandenbergh P.A."/>
        </authorList>
    </citation>
    <scope>NUCLEOTIDE SEQUENCE [GENOMIC DNA]</scope>
    <scope>FUNCTION</scope>
    <source>
        <strain>DCH-4</strain>
    </source>
</reference>
<reference key="2">
    <citation type="journal article" date="2003" name="Nucleic Acids Res.">
        <title>A nomenclature for restriction enzymes, DNA methyltransferases, homing endonucleases and their genes.</title>
        <authorList>
            <person name="Roberts R.J."/>
            <person name="Belfort M."/>
            <person name="Bestor T."/>
            <person name="Bhagwat A.S."/>
            <person name="Bickle T.A."/>
            <person name="Bitinaite J."/>
            <person name="Blumenthal R.M."/>
            <person name="Degtyarev S.K."/>
            <person name="Dryden D.T."/>
            <person name="Dybvig K."/>
            <person name="Firman K."/>
            <person name="Gromova E.S."/>
            <person name="Gumport R.I."/>
            <person name="Halford S.E."/>
            <person name="Hattman S."/>
            <person name="Heitman J."/>
            <person name="Hornby D.P."/>
            <person name="Janulaitis A."/>
            <person name="Jeltsch A."/>
            <person name="Josephsen J."/>
            <person name="Kiss A."/>
            <person name="Klaenhammer T.R."/>
            <person name="Kobayashi I."/>
            <person name="Kong H."/>
            <person name="Krueger D.H."/>
            <person name="Lacks S."/>
            <person name="Marinus M.G."/>
            <person name="Miyahara M."/>
            <person name="Morgan R.D."/>
            <person name="Murray N.E."/>
            <person name="Nagaraja V."/>
            <person name="Piekarowicz A."/>
            <person name="Pingoud A."/>
            <person name="Raleigh E."/>
            <person name="Rao D.N."/>
            <person name="Reich N."/>
            <person name="Repin V.E."/>
            <person name="Selker E.U."/>
            <person name="Shaw P.C."/>
            <person name="Stein D.C."/>
            <person name="Stoddard B.L."/>
            <person name="Szybalski W."/>
            <person name="Trautner T.A."/>
            <person name="Van Etten J.L."/>
            <person name="Vitor J.M."/>
            <person name="Wilson G.G."/>
            <person name="Xu S.Y."/>
        </authorList>
    </citation>
    <scope>NOMENCLATURE</scope>
    <scope>SUBTYPE</scope>
</reference>
<organism>
    <name type="scientific">Lactococcus lactis subsp. cremoris</name>
    <name type="common">Streptococcus cremoris</name>
    <dbReference type="NCBI Taxonomy" id="1359"/>
    <lineage>
        <taxon>Bacteria</taxon>
        <taxon>Bacillati</taxon>
        <taxon>Bacillota</taxon>
        <taxon>Bacilli</taxon>
        <taxon>Lactobacillales</taxon>
        <taxon>Streptococcaceae</taxon>
        <taxon>Lactococcus</taxon>
    </lineage>
</organism>
<keyword id="KW-0238">DNA-binding</keyword>
<keyword id="KW-0489">Methyltransferase</keyword>
<keyword id="KW-0614">Plasmid</keyword>
<keyword id="KW-0680">Restriction system</keyword>
<keyword id="KW-0949">S-adenosyl-L-methionine</keyword>
<keyword id="KW-0808">Transferase</keyword>
<sequence>MAINEYKYGGVLMTKPYYEKENAILVHADSFKLLEKIKPESMDMIFADPPYFLSNGGMSNSGGQIVSVDKGDWDKISSFEEKHDFNRRWIRLARLVLKPNGTIWVSGSLHNIYSVGMALEQEGFKILNNITWQKTNPAPNLSCRYFTHSTETILWARKNDKKSRHYYNYELMKEFNDGKQMKDVWTGSLTKKSEKWAGKHPTQKPEYILERIILASTKENDYILDPFVGSGTTGVVAKRLGRKFIGIDSEKEYLKIAKKRLNKGATYGL</sequence>
<comment type="function">
    <text evidence="3 5">A beta subtype methylase, recognizes the double-stranded sequence 5'-GATC-3', methylates A-2 on both strands, and protects the DNA from cleavage by the LlaDCHI endonuclease.</text>
</comment>
<comment type="catalytic activity">
    <reaction>
        <text>a 2'-deoxyadenosine in DNA + S-adenosyl-L-methionine = an N(6)-methyl-2'-deoxyadenosine in DNA + S-adenosyl-L-homocysteine + H(+)</text>
        <dbReference type="Rhea" id="RHEA:15197"/>
        <dbReference type="Rhea" id="RHEA-COMP:12418"/>
        <dbReference type="Rhea" id="RHEA-COMP:12419"/>
        <dbReference type="ChEBI" id="CHEBI:15378"/>
        <dbReference type="ChEBI" id="CHEBI:57856"/>
        <dbReference type="ChEBI" id="CHEBI:59789"/>
        <dbReference type="ChEBI" id="CHEBI:90615"/>
        <dbReference type="ChEBI" id="CHEBI:90616"/>
        <dbReference type="EC" id="2.1.1.72"/>
    </reaction>
</comment>
<comment type="miscellaneous">
    <text evidence="1">The LlaDCHI restriction system has two different methylases.</text>
</comment>
<comment type="miscellaneous">
    <text evidence="5">Genes encoded on plasmid pSQR700 confer strong resistance to the three most common lactococcal phage species (936, c2, and P335). Its presence is probably one reason for the strong bacteriophage resistance shown by strain DCH-4 over the years.</text>
</comment>
<comment type="similarity">
    <text evidence="4">Belongs to the N(4)/N(6)-methyltransferase family.</text>
</comment>
<proteinExistence type="inferred from homology"/>
<dbReference type="EC" id="2.1.1.72"/>
<dbReference type="EMBL" id="U16027">
    <property type="protein sequence ID" value="AAB06312.1"/>
    <property type="molecule type" value="Genomic_DNA"/>
</dbReference>
<dbReference type="RefSeq" id="NP_116732.1">
    <property type="nucleotide sequence ID" value="NC_002798.1"/>
</dbReference>
<dbReference type="RefSeq" id="WP_010925606.1">
    <property type="nucleotide sequence ID" value="NZ_VBTA01000012.1"/>
</dbReference>
<dbReference type="SMR" id="P50178"/>
<dbReference type="REBASE" id="249492">
    <property type="entry name" value="M2.WciM2ORF523P"/>
</dbReference>
<dbReference type="REBASE" id="3663">
    <property type="entry name" value="M2.LlaDCHI"/>
</dbReference>
<dbReference type="PRO" id="PR:P50178"/>
<dbReference type="GO" id="GO:0005737">
    <property type="term" value="C:cytoplasm"/>
    <property type="evidence" value="ECO:0007669"/>
    <property type="project" value="TreeGrafter"/>
</dbReference>
<dbReference type="GO" id="GO:0003677">
    <property type="term" value="F:DNA binding"/>
    <property type="evidence" value="ECO:0007669"/>
    <property type="project" value="UniProtKB-KW"/>
</dbReference>
<dbReference type="GO" id="GO:0008170">
    <property type="term" value="F:N-methyltransferase activity"/>
    <property type="evidence" value="ECO:0007669"/>
    <property type="project" value="InterPro"/>
</dbReference>
<dbReference type="GO" id="GO:0009007">
    <property type="term" value="F:site-specific DNA-methyltransferase (adenine-specific) activity"/>
    <property type="evidence" value="ECO:0007669"/>
    <property type="project" value="UniProtKB-EC"/>
</dbReference>
<dbReference type="GO" id="GO:0009307">
    <property type="term" value="P:DNA restriction-modification system"/>
    <property type="evidence" value="ECO:0007669"/>
    <property type="project" value="UniProtKB-KW"/>
</dbReference>
<dbReference type="GO" id="GO:0032259">
    <property type="term" value="P:methylation"/>
    <property type="evidence" value="ECO:0007669"/>
    <property type="project" value="UniProtKB-KW"/>
</dbReference>
<dbReference type="Gene3D" id="3.40.50.150">
    <property type="entry name" value="Vaccinia Virus protein VP39"/>
    <property type="match status" value="1"/>
</dbReference>
<dbReference type="InterPro" id="IPR002941">
    <property type="entry name" value="DNA_methylase_N4/N6"/>
</dbReference>
<dbReference type="InterPro" id="IPR002052">
    <property type="entry name" value="DNA_methylase_N6_adenine_CS"/>
</dbReference>
<dbReference type="InterPro" id="IPR001091">
    <property type="entry name" value="RM_Methyltransferase"/>
</dbReference>
<dbReference type="InterPro" id="IPR029063">
    <property type="entry name" value="SAM-dependent_MTases_sf"/>
</dbReference>
<dbReference type="PANTHER" id="PTHR13370">
    <property type="entry name" value="RNA METHYLASE-RELATED"/>
    <property type="match status" value="1"/>
</dbReference>
<dbReference type="PANTHER" id="PTHR13370:SF3">
    <property type="entry name" value="TRNA (GUANINE(10)-N2)-METHYLTRANSFERASE HOMOLOG"/>
    <property type="match status" value="1"/>
</dbReference>
<dbReference type="Pfam" id="PF01555">
    <property type="entry name" value="N6_N4_Mtase"/>
    <property type="match status" value="1"/>
</dbReference>
<dbReference type="PRINTS" id="PR00508">
    <property type="entry name" value="S21N4MTFRASE"/>
</dbReference>
<dbReference type="SUPFAM" id="SSF53335">
    <property type="entry name" value="S-adenosyl-L-methionine-dependent methyltransferases"/>
    <property type="match status" value="1"/>
</dbReference>
<dbReference type="PROSITE" id="PS00092">
    <property type="entry name" value="N6_MTASE"/>
    <property type="match status" value="1"/>
</dbReference>